<dbReference type="EMBL" id="AE009442">
    <property type="protein sequence ID" value="AAO28333.1"/>
    <property type="molecule type" value="Genomic_DNA"/>
</dbReference>
<dbReference type="RefSeq" id="WP_004090125.1">
    <property type="nucleotide sequence ID" value="NC_004556.1"/>
</dbReference>
<dbReference type="SMR" id="Q87E65"/>
<dbReference type="GeneID" id="93904156"/>
<dbReference type="KEGG" id="xft:PD_0454"/>
<dbReference type="HOGENOM" id="CLU_065898_2_2_6"/>
<dbReference type="Proteomes" id="UP000002516">
    <property type="component" value="Chromosome"/>
</dbReference>
<dbReference type="GO" id="GO:0015935">
    <property type="term" value="C:small ribosomal subunit"/>
    <property type="evidence" value="ECO:0007669"/>
    <property type="project" value="InterPro"/>
</dbReference>
<dbReference type="GO" id="GO:0019843">
    <property type="term" value="F:rRNA binding"/>
    <property type="evidence" value="ECO:0007669"/>
    <property type="project" value="UniProtKB-UniRule"/>
</dbReference>
<dbReference type="GO" id="GO:0003735">
    <property type="term" value="F:structural constituent of ribosome"/>
    <property type="evidence" value="ECO:0007669"/>
    <property type="project" value="InterPro"/>
</dbReference>
<dbReference type="GO" id="GO:0006412">
    <property type="term" value="P:translation"/>
    <property type="evidence" value="ECO:0007669"/>
    <property type="project" value="UniProtKB-UniRule"/>
</dbReference>
<dbReference type="FunFam" id="3.30.160.20:FF:000001">
    <property type="entry name" value="30S ribosomal protein S5"/>
    <property type="match status" value="1"/>
</dbReference>
<dbReference type="FunFam" id="3.30.230.10:FF:000002">
    <property type="entry name" value="30S ribosomal protein S5"/>
    <property type="match status" value="1"/>
</dbReference>
<dbReference type="Gene3D" id="3.30.160.20">
    <property type="match status" value="1"/>
</dbReference>
<dbReference type="Gene3D" id="3.30.230.10">
    <property type="match status" value="1"/>
</dbReference>
<dbReference type="HAMAP" id="MF_01307_B">
    <property type="entry name" value="Ribosomal_uS5_B"/>
    <property type="match status" value="1"/>
</dbReference>
<dbReference type="InterPro" id="IPR020568">
    <property type="entry name" value="Ribosomal_Su5_D2-typ_SF"/>
</dbReference>
<dbReference type="InterPro" id="IPR000851">
    <property type="entry name" value="Ribosomal_uS5"/>
</dbReference>
<dbReference type="InterPro" id="IPR005712">
    <property type="entry name" value="Ribosomal_uS5_bac-type"/>
</dbReference>
<dbReference type="InterPro" id="IPR005324">
    <property type="entry name" value="Ribosomal_uS5_C"/>
</dbReference>
<dbReference type="InterPro" id="IPR013810">
    <property type="entry name" value="Ribosomal_uS5_N"/>
</dbReference>
<dbReference type="InterPro" id="IPR018192">
    <property type="entry name" value="Ribosomal_uS5_N_CS"/>
</dbReference>
<dbReference type="InterPro" id="IPR014721">
    <property type="entry name" value="Ribsml_uS5_D2-typ_fold_subgr"/>
</dbReference>
<dbReference type="NCBIfam" id="TIGR01021">
    <property type="entry name" value="rpsE_bact"/>
    <property type="match status" value="1"/>
</dbReference>
<dbReference type="PANTHER" id="PTHR48277">
    <property type="entry name" value="MITOCHONDRIAL RIBOSOMAL PROTEIN S5"/>
    <property type="match status" value="1"/>
</dbReference>
<dbReference type="PANTHER" id="PTHR48277:SF1">
    <property type="entry name" value="MITOCHONDRIAL RIBOSOMAL PROTEIN S5"/>
    <property type="match status" value="1"/>
</dbReference>
<dbReference type="Pfam" id="PF00333">
    <property type="entry name" value="Ribosomal_S5"/>
    <property type="match status" value="1"/>
</dbReference>
<dbReference type="Pfam" id="PF03719">
    <property type="entry name" value="Ribosomal_S5_C"/>
    <property type="match status" value="1"/>
</dbReference>
<dbReference type="SUPFAM" id="SSF54768">
    <property type="entry name" value="dsRNA-binding domain-like"/>
    <property type="match status" value="1"/>
</dbReference>
<dbReference type="SUPFAM" id="SSF54211">
    <property type="entry name" value="Ribosomal protein S5 domain 2-like"/>
    <property type="match status" value="1"/>
</dbReference>
<dbReference type="PROSITE" id="PS00585">
    <property type="entry name" value="RIBOSOMAL_S5"/>
    <property type="match status" value="1"/>
</dbReference>
<dbReference type="PROSITE" id="PS50881">
    <property type="entry name" value="S5_DSRBD"/>
    <property type="match status" value="1"/>
</dbReference>
<proteinExistence type="inferred from homology"/>
<reference key="1">
    <citation type="journal article" date="2003" name="J. Bacteriol.">
        <title>Comparative analyses of the complete genome sequences of Pierce's disease and citrus variegated chlorosis strains of Xylella fastidiosa.</title>
        <authorList>
            <person name="Van Sluys M.A."/>
            <person name="de Oliveira M.C."/>
            <person name="Monteiro-Vitorello C.B."/>
            <person name="Miyaki C.Y."/>
            <person name="Furlan L.R."/>
            <person name="Camargo L.E.A."/>
            <person name="da Silva A.C.R."/>
            <person name="Moon D.H."/>
            <person name="Takita M.A."/>
            <person name="Lemos E.G.M."/>
            <person name="Machado M.A."/>
            <person name="Ferro M.I.T."/>
            <person name="da Silva F.R."/>
            <person name="Goldman M.H.S."/>
            <person name="Goldman G.H."/>
            <person name="Lemos M.V.F."/>
            <person name="El-Dorry H."/>
            <person name="Tsai S.M."/>
            <person name="Carrer H."/>
            <person name="Carraro D.M."/>
            <person name="de Oliveira R.C."/>
            <person name="Nunes L.R."/>
            <person name="Siqueira W.J."/>
            <person name="Coutinho L.L."/>
            <person name="Kimura E.T."/>
            <person name="Ferro E.S."/>
            <person name="Harakava R."/>
            <person name="Kuramae E.E."/>
            <person name="Marino C.L."/>
            <person name="Giglioti E."/>
            <person name="Abreu I.L."/>
            <person name="Alves L.M.C."/>
            <person name="do Amaral A.M."/>
            <person name="Baia G.S."/>
            <person name="Blanco S.R."/>
            <person name="Brito M.S."/>
            <person name="Cannavan F.S."/>
            <person name="Celestino A.V."/>
            <person name="da Cunha A.F."/>
            <person name="Fenille R.C."/>
            <person name="Ferro J.A."/>
            <person name="Formighieri E.F."/>
            <person name="Kishi L.T."/>
            <person name="Leoni S.G."/>
            <person name="Oliveira A.R."/>
            <person name="Rosa V.E. Jr."/>
            <person name="Sassaki F.T."/>
            <person name="Sena J.A.D."/>
            <person name="de Souza A.A."/>
            <person name="Truffi D."/>
            <person name="Tsukumo F."/>
            <person name="Yanai G.M."/>
            <person name="Zaros L.G."/>
            <person name="Civerolo E.L."/>
            <person name="Simpson A.J.G."/>
            <person name="Almeida N.F. Jr."/>
            <person name="Setubal J.C."/>
            <person name="Kitajima J.P."/>
        </authorList>
    </citation>
    <scope>NUCLEOTIDE SEQUENCE [LARGE SCALE GENOMIC DNA]</scope>
    <source>
        <strain>Temecula1 / ATCC 700964</strain>
    </source>
</reference>
<comment type="function">
    <text evidence="1">With S4 and S12 plays an important role in translational accuracy.</text>
</comment>
<comment type="function">
    <text evidence="1">Located at the back of the 30S subunit body where it stabilizes the conformation of the head with respect to the body.</text>
</comment>
<comment type="subunit">
    <text evidence="1">Part of the 30S ribosomal subunit. Contacts proteins S4 and S8.</text>
</comment>
<comment type="domain">
    <text>The N-terminal domain interacts with the head of the 30S subunit; the C-terminal domain interacts with the body and contacts protein S4. The interaction surface between S4 and S5 is involved in control of translational fidelity.</text>
</comment>
<comment type="similarity">
    <text evidence="1">Belongs to the universal ribosomal protein uS5 family.</text>
</comment>
<keyword id="KW-1185">Reference proteome</keyword>
<keyword id="KW-0687">Ribonucleoprotein</keyword>
<keyword id="KW-0689">Ribosomal protein</keyword>
<keyword id="KW-0694">RNA-binding</keyword>
<keyword id="KW-0699">rRNA-binding</keyword>
<accession>Q87E65</accession>
<organism>
    <name type="scientific">Xylella fastidiosa (strain Temecula1 / ATCC 700964)</name>
    <dbReference type="NCBI Taxonomy" id="183190"/>
    <lineage>
        <taxon>Bacteria</taxon>
        <taxon>Pseudomonadati</taxon>
        <taxon>Pseudomonadota</taxon>
        <taxon>Gammaproteobacteria</taxon>
        <taxon>Lysobacterales</taxon>
        <taxon>Lysobacteraceae</taxon>
        <taxon>Xylella</taxon>
    </lineage>
</organism>
<gene>
    <name evidence="1" type="primary">rpsE</name>
    <name type="ordered locus">PD_0454</name>
</gene>
<protein>
    <recommendedName>
        <fullName evidence="1">Small ribosomal subunit protein uS5</fullName>
    </recommendedName>
    <alternativeName>
        <fullName evidence="2">30S ribosomal protein S5</fullName>
    </alternativeName>
</protein>
<feature type="chain" id="PRO_0000131639" description="Small ribosomal subunit protein uS5">
    <location>
        <begin position="1"/>
        <end position="179"/>
    </location>
</feature>
<feature type="domain" description="S5 DRBM" evidence="1">
    <location>
        <begin position="22"/>
        <end position="85"/>
    </location>
</feature>
<name>RS5_XYLFT</name>
<sequence>MAEERSQRSRDRSREEKIDDGMIEKLVAVNRVSKTVKGGRQFTFTALTIVGNGEGSVGFGYGKAREVPVAIQKSMEYARKRMSNVSLNNGTLWHPVKANHGAASVFMKPASEGTGVIAGGAMRAVLEAVGVKNVLAKAIGSRNPINLVRATLKGLEDMQSPTHIALKRGKNVRDFSHGS</sequence>
<evidence type="ECO:0000255" key="1">
    <source>
        <dbReference type="HAMAP-Rule" id="MF_01307"/>
    </source>
</evidence>
<evidence type="ECO:0000305" key="2"/>